<keyword id="KW-0312">Gluconeogenesis</keyword>
<keyword id="KW-0324">Glycolysis</keyword>
<keyword id="KW-0413">Isomerase</keyword>
<dbReference type="EC" id="5.4.2.11" evidence="1"/>
<dbReference type="EMBL" id="CP000395">
    <property type="protein sequence ID" value="ABH01933.1"/>
    <property type="molecule type" value="Genomic_DNA"/>
</dbReference>
<dbReference type="EMBL" id="CP002933">
    <property type="protein sequence ID" value="AEL69878.1"/>
    <property type="molecule type" value="Genomic_DNA"/>
</dbReference>
<dbReference type="RefSeq" id="WP_004790089.1">
    <property type="nucleotide sequence ID" value="NZ_CP160066.1"/>
</dbReference>
<dbReference type="SMR" id="Q0SMJ5"/>
<dbReference type="STRING" id="29518.BLA32_00945"/>
<dbReference type="GeneID" id="77265511"/>
<dbReference type="KEGG" id="baf:BAPKO_0702"/>
<dbReference type="KEGG" id="bafz:BafPKo_0682"/>
<dbReference type="PATRIC" id="fig|390236.22.peg.651"/>
<dbReference type="eggNOG" id="COG0588">
    <property type="taxonomic scope" value="Bacteria"/>
</dbReference>
<dbReference type="HOGENOM" id="CLU_033323_1_1_12"/>
<dbReference type="OrthoDB" id="9781415at2"/>
<dbReference type="UniPathway" id="UPA00109">
    <property type="reaction ID" value="UER00186"/>
</dbReference>
<dbReference type="Proteomes" id="UP000005216">
    <property type="component" value="Chromosome"/>
</dbReference>
<dbReference type="GO" id="GO:0004619">
    <property type="term" value="F:phosphoglycerate mutase activity"/>
    <property type="evidence" value="ECO:0007669"/>
    <property type="project" value="UniProtKB-EC"/>
</dbReference>
<dbReference type="GO" id="GO:0006094">
    <property type="term" value="P:gluconeogenesis"/>
    <property type="evidence" value="ECO:0007669"/>
    <property type="project" value="UniProtKB-UniRule"/>
</dbReference>
<dbReference type="GO" id="GO:0006096">
    <property type="term" value="P:glycolytic process"/>
    <property type="evidence" value="ECO:0007669"/>
    <property type="project" value="UniProtKB-UniRule"/>
</dbReference>
<dbReference type="CDD" id="cd07067">
    <property type="entry name" value="HP_PGM_like"/>
    <property type="match status" value="1"/>
</dbReference>
<dbReference type="FunFam" id="3.40.50.1240:FF:000003">
    <property type="entry name" value="2,3-bisphosphoglycerate-dependent phosphoglycerate mutase"/>
    <property type="match status" value="1"/>
</dbReference>
<dbReference type="Gene3D" id="3.40.50.1240">
    <property type="entry name" value="Phosphoglycerate mutase-like"/>
    <property type="match status" value="1"/>
</dbReference>
<dbReference type="HAMAP" id="MF_01039">
    <property type="entry name" value="PGAM_GpmA"/>
    <property type="match status" value="1"/>
</dbReference>
<dbReference type="InterPro" id="IPR013078">
    <property type="entry name" value="His_Pase_superF_clade-1"/>
</dbReference>
<dbReference type="InterPro" id="IPR029033">
    <property type="entry name" value="His_PPase_superfam"/>
</dbReference>
<dbReference type="InterPro" id="IPR001345">
    <property type="entry name" value="PG/BPGM_mutase_AS"/>
</dbReference>
<dbReference type="InterPro" id="IPR005952">
    <property type="entry name" value="Phosphogly_mut1"/>
</dbReference>
<dbReference type="NCBIfam" id="TIGR01258">
    <property type="entry name" value="pgm_1"/>
    <property type="match status" value="1"/>
</dbReference>
<dbReference type="NCBIfam" id="NF010713">
    <property type="entry name" value="PRK14115.1"/>
    <property type="match status" value="1"/>
</dbReference>
<dbReference type="PANTHER" id="PTHR11931">
    <property type="entry name" value="PHOSPHOGLYCERATE MUTASE"/>
    <property type="match status" value="1"/>
</dbReference>
<dbReference type="Pfam" id="PF00300">
    <property type="entry name" value="His_Phos_1"/>
    <property type="match status" value="1"/>
</dbReference>
<dbReference type="PIRSF" id="PIRSF000709">
    <property type="entry name" value="6PFK_2-Ptase"/>
    <property type="match status" value="1"/>
</dbReference>
<dbReference type="SMART" id="SM00855">
    <property type="entry name" value="PGAM"/>
    <property type="match status" value="1"/>
</dbReference>
<dbReference type="SUPFAM" id="SSF53254">
    <property type="entry name" value="Phosphoglycerate mutase-like"/>
    <property type="match status" value="1"/>
</dbReference>
<dbReference type="PROSITE" id="PS00175">
    <property type="entry name" value="PG_MUTASE"/>
    <property type="match status" value="1"/>
</dbReference>
<feature type="chain" id="PRO_1000064033" description="2,3-bisphosphoglycerate-dependent phosphoglycerate mutase">
    <location>
        <begin position="1"/>
        <end position="248"/>
    </location>
</feature>
<feature type="active site" description="Tele-phosphohistidine intermediate" evidence="1">
    <location>
        <position position="9"/>
    </location>
</feature>
<feature type="active site" description="Proton donor/acceptor" evidence="1">
    <location>
        <position position="87"/>
    </location>
</feature>
<feature type="binding site" evidence="1">
    <location>
        <begin position="8"/>
        <end position="15"/>
    </location>
    <ligand>
        <name>substrate</name>
    </ligand>
</feature>
<feature type="binding site" evidence="1">
    <location>
        <begin position="21"/>
        <end position="22"/>
    </location>
    <ligand>
        <name>substrate</name>
    </ligand>
</feature>
<feature type="binding site" evidence="1">
    <location>
        <position position="60"/>
    </location>
    <ligand>
        <name>substrate</name>
    </ligand>
</feature>
<feature type="binding site" evidence="1">
    <location>
        <begin position="87"/>
        <end position="90"/>
    </location>
    <ligand>
        <name>substrate</name>
    </ligand>
</feature>
<feature type="binding site" evidence="1">
    <location>
        <position position="98"/>
    </location>
    <ligand>
        <name>substrate</name>
    </ligand>
</feature>
<feature type="binding site" evidence="1">
    <location>
        <begin position="114"/>
        <end position="115"/>
    </location>
    <ligand>
        <name>substrate</name>
    </ligand>
</feature>
<feature type="binding site" evidence="1">
    <location>
        <begin position="183"/>
        <end position="184"/>
    </location>
    <ligand>
        <name>substrate</name>
    </ligand>
</feature>
<feature type="site" description="Transition state stabilizer" evidence="1">
    <location>
        <position position="182"/>
    </location>
</feature>
<accession>Q0SMJ5</accession>
<accession>G0IQK8</accession>
<sequence length="248" mass="28499">MYKLVLVRHGESEWNKENLFTGWTDVKLSDKGVDEAIEAGLLLKQEGYFFDIAFSSLLSRANDTLNIILKELGQSYISVKKTWRLNERHYGALQGLNKSETAAKYGEDKVLIWRRSYDVPPMSLDESDDRHPIKDPRYKYIPKRELPSTECLKDTIARVIPYWIDEIAKEILEGKKVIVAAHGNSLRALVKYLDNLSEEDVLKLNIPTGIPLVYELDKDLNPIKHYYLGDENKIKKAMESVASQGKLR</sequence>
<gene>
    <name evidence="1" type="primary">gpmA</name>
    <name type="ordered locus">BAPKO_0702</name>
    <name type="ordered locus">BafPKo_0682</name>
</gene>
<evidence type="ECO:0000255" key="1">
    <source>
        <dbReference type="HAMAP-Rule" id="MF_01039"/>
    </source>
</evidence>
<proteinExistence type="inferred from homology"/>
<organism>
    <name type="scientific">Borreliella afzelii (strain PKo)</name>
    <name type="common">Borrelia afzelii</name>
    <dbReference type="NCBI Taxonomy" id="390236"/>
    <lineage>
        <taxon>Bacteria</taxon>
        <taxon>Pseudomonadati</taxon>
        <taxon>Spirochaetota</taxon>
        <taxon>Spirochaetia</taxon>
        <taxon>Spirochaetales</taxon>
        <taxon>Borreliaceae</taxon>
        <taxon>Borreliella</taxon>
    </lineage>
</organism>
<protein>
    <recommendedName>
        <fullName evidence="1">2,3-bisphosphoglycerate-dependent phosphoglycerate mutase</fullName>
        <shortName evidence="1">BPG-dependent PGAM</shortName>
        <shortName evidence="1">PGAM</shortName>
        <shortName evidence="1">Phosphoglyceromutase</shortName>
        <shortName evidence="1">dPGM</shortName>
        <ecNumber evidence="1">5.4.2.11</ecNumber>
    </recommendedName>
</protein>
<reference key="1">
    <citation type="journal article" date="2006" name="BMC Genomics">
        <title>Comparative genome analysis: selection pressure on the Borrelia vls cassettes is essential for infectivity.</title>
        <authorList>
            <person name="Gloeckner G."/>
            <person name="Schulte-Spechtel U."/>
            <person name="Schilhabel M."/>
            <person name="Felder M."/>
            <person name="Suehnel J."/>
            <person name="Wilske B."/>
            <person name="Platzer M."/>
        </authorList>
    </citation>
    <scope>NUCLEOTIDE SEQUENCE [LARGE SCALE GENOMIC DNA]</scope>
    <source>
        <strain>PKo</strain>
    </source>
</reference>
<reference key="2">
    <citation type="journal article" date="2011" name="J. Bacteriol.">
        <title>Whole-genome sequences of two Borrelia afzelii and two Borrelia garinii Lyme disease agent isolates.</title>
        <authorList>
            <person name="Casjens S.R."/>
            <person name="Mongodin E.F."/>
            <person name="Qiu W.G."/>
            <person name="Dunn J.J."/>
            <person name="Luft B.J."/>
            <person name="Fraser-Liggett C.M."/>
            <person name="Schutzer S.E."/>
        </authorList>
    </citation>
    <scope>NUCLEOTIDE SEQUENCE [LARGE SCALE GENOMIC DNA]</scope>
    <source>
        <strain>PKo</strain>
    </source>
</reference>
<name>GPMA_BORAP</name>
<comment type="function">
    <text evidence="1">Catalyzes the interconversion of 2-phosphoglycerate and 3-phosphoglycerate.</text>
</comment>
<comment type="catalytic activity">
    <reaction evidence="1">
        <text>(2R)-2-phosphoglycerate = (2R)-3-phosphoglycerate</text>
        <dbReference type="Rhea" id="RHEA:15901"/>
        <dbReference type="ChEBI" id="CHEBI:58272"/>
        <dbReference type="ChEBI" id="CHEBI:58289"/>
        <dbReference type="EC" id="5.4.2.11"/>
    </reaction>
</comment>
<comment type="pathway">
    <text evidence="1">Carbohydrate degradation; glycolysis; pyruvate from D-glyceraldehyde 3-phosphate: step 3/5.</text>
</comment>
<comment type="similarity">
    <text evidence="1">Belongs to the phosphoglycerate mutase family. BPG-dependent PGAM subfamily.</text>
</comment>